<dbReference type="EMBL" id="L07806">
    <property type="protein sequence ID" value="AAA41360.1"/>
    <property type="molecule type" value="mRNA"/>
</dbReference>
<dbReference type="EMBL" id="D13122">
    <property type="protein sequence ID" value="BAA02424.1"/>
    <property type="molecule type" value="mRNA"/>
</dbReference>
<dbReference type="EMBL" id="U12250">
    <property type="protein sequence ID" value="AAA85094.1"/>
    <property type="molecule type" value="Genomic_DNA"/>
</dbReference>
<dbReference type="EMBL" id="BC126065">
    <property type="protein sequence ID" value="AAI26066.1"/>
    <property type="molecule type" value="mRNA"/>
</dbReference>
<dbReference type="PIR" id="JS0738">
    <property type="entry name" value="JS0738"/>
</dbReference>
<dbReference type="RefSeq" id="NP_037047.2">
    <property type="nucleotide sequence ID" value="NM_012915.3"/>
</dbReference>
<dbReference type="SMR" id="Q03344"/>
<dbReference type="CORUM" id="Q03344"/>
<dbReference type="FunCoup" id="Q03344">
    <property type="interactions" value="1294"/>
</dbReference>
<dbReference type="STRING" id="10116.ENSRNOP00000018038"/>
<dbReference type="iPTMnet" id="Q03344"/>
<dbReference type="PhosphoSitePlus" id="Q03344"/>
<dbReference type="jPOST" id="Q03344"/>
<dbReference type="PaxDb" id="10116-ENSRNOP00000018038"/>
<dbReference type="Ensembl" id="ENSRNOT00000018038.6">
    <property type="protein sequence ID" value="ENSRNOP00000018038.3"/>
    <property type="gene ID" value="ENSRNOG00000013300.6"/>
</dbReference>
<dbReference type="GeneID" id="25392"/>
<dbReference type="KEGG" id="rno:25392"/>
<dbReference type="UCSC" id="RGD:2181">
    <property type="organism name" value="rat"/>
</dbReference>
<dbReference type="AGR" id="RGD:2181"/>
<dbReference type="CTD" id="93974"/>
<dbReference type="RGD" id="2181">
    <property type="gene designation" value="Atp5if1"/>
</dbReference>
<dbReference type="eggNOG" id="ENOG502S4JP">
    <property type="taxonomic scope" value="Eukaryota"/>
</dbReference>
<dbReference type="GeneTree" id="ENSGT00390000006264"/>
<dbReference type="HOGENOM" id="CLU_147479_0_0_1"/>
<dbReference type="InParanoid" id="Q03344"/>
<dbReference type="OMA" id="AFHEEHI"/>
<dbReference type="OrthoDB" id="10045676at2759"/>
<dbReference type="PhylomeDB" id="Q03344"/>
<dbReference type="TreeFam" id="TF320659"/>
<dbReference type="ChiTaRS" id="Atpif1">
    <property type="organism name" value="rat"/>
</dbReference>
<dbReference type="PRO" id="PR:Q03344"/>
<dbReference type="Proteomes" id="UP000002494">
    <property type="component" value="Chromosome 5"/>
</dbReference>
<dbReference type="Bgee" id="ENSRNOG00000013300">
    <property type="expression patterns" value="Expressed in duodenum and 20 other cell types or tissues"/>
</dbReference>
<dbReference type="GO" id="GO:0009986">
    <property type="term" value="C:cell surface"/>
    <property type="evidence" value="ECO:0000250"/>
    <property type="project" value="UniProtKB"/>
</dbReference>
<dbReference type="GO" id="GO:0005737">
    <property type="term" value="C:cytoplasm"/>
    <property type="evidence" value="ECO:0000318"/>
    <property type="project" value="GO_Central"/>
</dbReference>
<dbReference type="GO" id="GO:0005739">
    <property type="term" value="C:mitochondrion"/>
    <property type="evidence" value="ECO:0000250"/>
    <property type="project" value="UniProtKB"/>
</dbReference>
<dbReference type="GO" id="GO:0032991">
    <property type="term" value="C:protein-containing complex"/>
    <property type="evidence" value="ECO:0000250"/>
    <property type="project" value="UniProtKB"/>
</dbReference>
<dbReference type="GO" id="GO:0043532">
    <property type="term" value="F:angiostatin binding"/>
    <property type="evidence" value="ECO:0000250"/>
    <property type="project" value="UniProtKB"/>
</dbReference>
<dbReference type="GO" id="GO:0051117">
    <property type="term" value="F:ATPase binding"/>
    <property type="evidence" value="ECO:0000250"/>
    <property type="project" value="UniProtKB"/>
</dbReference>
<dbReference type="GO" id="GO:0042030">
    <property type="term" value="F:ATPase inhibitor activity"/>
    <property type="evidence" value="ECO:0000314"/>
    <property type="project" value="RGD"/>
</dbReference>
<dbReference type="GO" id="GO:0005516">
    <property type="term" value="F:calmodulin binding"/>
    <property type="evidence" value="ECO:0000250"/>
    <property type="project" value="UniProtKB"/>
</dbReference>
<dbReference type="GO" id="GO:0019899">
    <property type="term" value="F:enzyme binding"/>
    <property type="evidence" value="ECO:0000266"/>
    <property type="project" value="RGD"/>
</dbReference>
<dbReference type="GO" id="GO:0042802">
    <property type="term" value="F:identical protein binding"/>
    <property type="evidence" value="ECO:0000250"/>
    <property type="project" value="UniProtKB"/>
</dbReference>
<dbReference type="GO" id="GO:0140260">
    <property type="term" value="F:mitochondrial proton-transporting ATP synthase complex binding"/>
    <property type="evidence" value="ECO:0000266"/>
    <property type="project" value="RGD"/>
</dbReference>
<dbReference type="GO" id="GO:0030218">
    <property type="term" value="P:erythrocyte differentiation"/>
    <property type="evidence" value="ECO:0000250"/>
    <property type="project" value="UniProtKB"/>
</dbReference>
<dbReference type="GO" id="GO:0006783">
    <property type="term" value="P:heme biosynthetic process"/>
    <property type="evidence" value="ECO:0000250"/>
    <property type="project" value="UniProtKB"/>
</dbReference>
<dbReference type="GO" id="GO:0051882">
    <property type="term" value="P:mitochondrial depolarization"/>
    <property type="evidence" value="ECO:0000266"/>
    <property type="project" value="RGD"/>
</dbReference>
<dbReference type="GO" id="GO:0001937">
    <property type="term" value="P:negative regulation of endothelial cell proliferation"/>
    <property type="evidence" value="ECO:0000250"/>
    <property type="project" value="UniProtKB"/>
</dbReference>
<dbReference type="GO" id="GO:0051346">
    <property type="term" value="P:negative regulation of hydrolase activity"/>
    <property type="evidence" value="ECO:0000250"/>
    <property type="project" value="UniProtKB"/>
</dbReference>
<dbReference type="GO" id="GO:1905707">
    <property type="term" value="P:negative regulation of mitochondrial ATP synthesis coupled proton transport"/>
    <property type="evidence" value="ECO:0000250"/>
    <property type="project" value="UniProtKB"/>
</dbReference>
<dbReference type="GO" id="GO:1901030">
    <property type="term" value="P:positive regulation of mitochondrial outer membrane permeabilization involved in apoptotic signaling pathway"/>
    <property type="evidence" value="ECO:0000266"/>
    <property type="project" value="RGD"/>
</dbReference>
<dbReference type="GO" id="GO:1903052">
    <property type="term" value="P:positive regulation of proteolysis involved in protein catabolic process"/>
    <property type="evidence" value="ECO:0000266"/>
    <property type="project" value="RGD"/>
</dbReference>
<dbReference type="GO" id="GO:1905091">
    <property type="term" value="P:positive regulation of type 2 mitophagy"/>
    <property type="evidence" value="ECO:0000266"/>
    <property type="project" value="RGD"/>
</dbReference>
<dbReference type="GO" id="GO:0072593">
    <property type="term" value="P:reactive oxygen species metabolic process"/>
    <property type="evidence" value="ECO:0000266"/>
    <property type="project" value="RGD"/>
</dbReference>
<dbReference type="GO" id="GO:1903578">
    <property type="term" value="P:regulation of ATP metabolic process"/>
    <property type="evidence" value="ECO:0000266"/>
    <property type="project" value="RGD"/>
</dbReference>
<dbReference type="GO" id="GO:1903214">
    <property type="term" value="P:regulation of protein targeting to mitochondrion"/>
    <property type="evidence" value="ECO:0000266"/>
    <property type="project" value="RGD"/>
</dbReference>
<dbReference type="FunFam" id="1.20.5.500:FF:000004">
    <property type="entry name" value="ATPase inhibitor A, mitochondrial"/>
    <property type="match status" value="1"/>
</dbReference>
<dbReference type="FunFam" id="1.20.5.500:FF:000003">
    <property type="entry name" value="ATPase inhibitor B, mitochondrial"/>
    <property type="match status" value="1"/>
</dbReference>
<dbReference type="Gene3D" id="1.20.5.500">
    <property type="entry name" value="Single helix bin"/>
    <property type="match status" value="2"/>
</dbReference>
<dbReference type="InterPro" id="IPR007648">
    <property type="entry name" value="ATPase_inhibitor_mt"/>
</dbReference>
<dbReference type="PANTHER" id="PTHR48417">
    <property type="entry name" value="ATP SYNTHASE F1 SUBUNIT EPSILON"/>
    <property type="match status" value="1"/>
</dbReference>
<dbReference type="PANTHER" id="PTHR48417:SF1">
    <property type="entry name" value="ATP SYNTHASE F1 SUBUNIT EPSILON"/>
    <property type="match status" value="1"/>
</dbReference>
<dbReference type="Pfam" id="PF04568">
    <property type="entry name" value="IATP"/>
    <property type="match status" value="1"/>
</dbReference>
<dbReference type="SUPFAM" id="SSF64602">
    <property type="entry name" value="F1 ATPase inhibitor, IF1, C-terminal domain"/>
    <property type="match status" value="1"/>
</dbReference>
<proteinExistence type="inferred from homology"/>
<evidence type="ECO:0000250" key="1"/>
<evidence type="ECO:0000250" key="2">
    <source>
        <dbReference type="UniProtKB" id="O35143"/>
    </source>
</evidence>
<evidence type="ECO:0000250" key="3">
    <source>
        <dbReference type="UniProtKB" id="P01096"/>
    </source>
</evidence>
<evidence type="ECO:0000250" key="4">
    <source>
        <dbReference type="UniProtKB" id="Q9UII2"/>
    </source>
</evidence>
<evidence type="ECO:0000255" key="5"/>
<evidence type="ECO:0000256" key="6">
    <source>
        <dbReference type="SAM" id="MobiDB-lite"/>
    </source>
</evidence>
<evidence type="ECO:0000305" key="7"/>
<evidence type="ECO:0000312" key="8">
    <source>
        <dbReference type="RGD" id="2181"/>
    </source>
</evidence>
<feature type="transit peptide" description="Mitochondrion">
    <location>
        <begin position="1"/>
        <end position="25"/>
    </location>
</feature>
<feature type="chain" id="PRO_0000002551" description="ATPase inhibitor, mitochondrial">
    <location>
        <begin position="26"/>
        <end position="107"/>
    </location>
</feature>
<feature type="region of interest" description="Disordered" evidence="6">
    <location>
        <begin position="25"/>
        <end position="58"/>
    </location>
</feature>
<feature type="region of interest" description="N-terminal inhibitory region" evidence="1">
    <location>
        <begin position="26"/>
        <end position="52"/>
    </location>
</feature>
<feature type="region of interest" description="Antiparallel alpha-helical coiled coil region" evidence="1">
    <location>
        <begin position="74"/>
        <end position="106"/>
    </location>
</feature>
<feature type="coiled-coil region" evidence="5">
    <location>
        <begin position="60"/>
        <end position="107"/>
    </location>
</feature>
<feature type="compositionally biased region" description="Basic and acidic residues" evidence="6">
    <location>
        <begin position="48"/>
        <end position="58"/>
    </location>
</feature>
<feature type="modified residue" description="Phosphoserine" evidence="4">
    <location>
        <position position="39"/>
    </location>
</feature>
<feature type="modified residue" description="N6-succinyllysine" evidence="2">
    <location>
        <position position="103"/>
    </location>
</feature>
<feature type="sequence conflict" description="In Ref. 1; AAA41360." evidence="7" ref="1">
    <original>MAGSALAVRAR</original>
    <variation>MTKSCRIEAST</variation>
    <location>
        <begin position="1"/>
        <end position="11"/>
    </location>
</feature>
<reference key="1">
    <citation type="journal article" date="1993" name="Arch. Biochem. Biophys.">
        <title>Regulation of the mitochondrial ATP synthase/ATPase complex: cDNA cloning, sequence, overexpression, and secondary structural characterization of a functional protein inhibitor.</title>
        <authorList>
            <person name="Lebowitz M.S."/>
            <person name="Pedersen P.L."/>
        </authorList>
    </citation>
    <scope>NUCLEOTIDE SEQUENCE [MRNA]</scope>
</reference>
<reference key="2">
    <citation type="journal article" date="1993" name="Biochim. Biophys. Acta">
        <title>Molecular cloning and sequence of cDNAs for the import precursors of oligomycin sensitivity conferring protein, ATPase inhibitor protein, and subunit c of H(+)-ATP synthase in rat mitochondria.</title>
        <authorList>
            <person name="Higuti T."/>
            <person name="Kuroiwa K."/>
            <person name="Kawamura Y."/>
            <person name="Morimoto K."/>
            <person name="Tsujita H."/>
        </authorList>
    </citation>
    <scope>NUCLEOTIDE SEQUENCE [MRNA]</scope>
</reference>
<reference key="3">
    <citation type="journal article" date="1995" name="Biochim. Biophys. Acta">
        <title>Isolation of the rat F1-ATPase inhibitor gene and its pseudogenes.</title>
        <authorList>
            <person name="Samuel D.S."/>
            <person name="Belote J.M."/>
            <person name="Chan S.H."/>
        </authorList>
    </citation>
    <scope>NUCLEOTIDE SEQUENCE [GENOMIC DNA]</scope>
</reference>
<reference key="4">
    <citation type="journal article" date="2004" name="Genome Res.">
        <title>The status, quality, and expansion of the NIH full-length cDNA project: the Mammalian Gene Collection (MGC).</title>
        <authorList>
            <consortium name="The MGC Project Team"/>
        </authorList>
    </citation>
    <scope>NUCLEOTIDE SEQUENCE [LARGE SCALE MRNA]</scope>
    <source>
        <tissue>Placenta</tissue>
    </source>
</reference>
<name>ATIF1_RAT</name>
<organism>
    <name type="scientific">Rattus norvegicus</name>
    <name type="common">Rat</name>
    <dbReference type="NCBI Taxonomy" id="10116"/>
    <lineage>
        <taxon>Eukaryota</taxon>
        <taxon>Metazoa</taxon>
        <taxon>Chordata</taxon>
        <taxon>Craniata</taxon>
        <taxon>Vertebrata</taxon>
        <taxon>Euteleostomi</taxon>
        <taxon>Mammalia</taxon>
        <taxon>Eutheria</taxon>
        <taxon>Euarchontoglires</taxon>
        <taxon>Glires</taxon>
        <taxon>Rodentia</taxon>
        <taxon>Myomorpha</taxon>
        <taxon>Muroidea</taxon>
        <taxon>Muridae</taxon>
        <taxon>Murinae</taxon>
        <taxon>Rattus</taxon>
    </lineage>
</organism>
<gene>
    <name evidence="8" type="primary">Atp5if1</name>
    <name type="synonym">Atpi</name>
    <name type="synonym">Atpif1</name>
    <name type="synonym">If1</name>
</gene>
<protein>
    <recommendedName>
        <fullName evidence="7">ATPase inhibitor, mitochondrial</fullName>
    </recommendedName>
    <alternativeName>
        <fullName evidence="8">ATP synthase F1 subunit epsilon</fullName>
    </alternativeName>
    <alternativeName>
        <fullName>Inhibitor of F(1)F(o)-ATPase</fullName>
        <shortName>IF(1)</shortName>
        <shortName>IF1</shortName>
    </alternativeName>
</protein>
<comment type="function">
    <text evidence="2 3">Endogenous F(1)F(o)-ATPase inhibitor limiting ATP depletion when the mitochondrial membrane potential falls below a threshold and the F(1)F(o)-ATP synthase starts hydrolyzing ATP to pump protons out of the mitochondrial matrix. Required to avoid the consumption of cellular ATP when the F(1)F(o)-ATP synthase enzyme acts as an ATP hydrolase (By similarity). Indirectly acts as a regulator of heme synthesis in erythroid tissues: regulates heme synthesis by modulating the mitochondrial pH and redox potential, allowing FECH to efficiently catalyze the incorporation of iron into protoporphyrin IX to produce heme (By similarity).</text>
</comment>
<comment type="subunit">
    <text evidence="1">Homodimer; represents the active form and is present at a pH value below 6.5. Homotetramer; represents the inactive form and is present at a pH value above 7.0 (By similarity).</text>
</comment>
<comment type="subcellular location">
    <subcellularLocation>
        <location evidence="1">Mitochondrion</location>
    </subcellularLocation>
</comment>
<comment type="domain">
    <text evidence="1">Forms an alpha-helical dimer with monomers associated via an antiparallel alpha-helical coiled coil composed of residues 74-106, leaving each N-terminal inhibitory region (residues 26-52) accessible for interaction with an F1 catalytic domain. The inhibitory N-terminal region (residues 26-52) binds the alpha(ADP-bound)-beta(ADP-bound) (ATP5F1A-ATP5F1B) interface of F1-ATPase, and also contact the central gamma subunit (ATP5F1C). This dimeric state is favored by pH values below 7.0, and at higher values the dimers associate to form inactive homotetramer, where the inhibitory region is occluded, masking its inhibitory activity (By similarity).</text>
</comment>
<comment type="similarity">
    <text evidence="7">Belongs to the ATPase inhibitor family.</text>
</comment>
<accession>Q03344</accession>
<accession>A0JMZ8</accession>
<keyword id="KW-0175">Coiled coil</keyword>
<keyword id="KW-0496">Mitochondrion</keyword>
<keyword id="KW-0597">Phosphoprotein</keyword>
<keyword id="KW-1185">Reference proteome</keyword>
<keyword id="KW-0809">Transit peptide</keyword>
<sequence>MAGSALAVRARLGVWGMRVLQTRGFGSDSSESMDSGAGSIREAGGAFGKREKAEEDRYFREKTREQLAALKKHHEDEIDHHSKEIERLQKQIERHKKKIKYLKNSEH</sequence>